<name>RNH2_SHESA</name>
<reference key="1">
    <citation type="submission" date="2006-09" db="EMBL/GenBank/DDBJ databases">
        <title>Complete sequence of chromosome 1 of Shewanella sp. ANA-3.</title>
        <authorList>
            <person name="Copeland A."/>
            <person name="Lucas S."/>
            <person name="Lapidus A."/>
            <person name="Barry K."/>
            <person name="Detter J.C."/>
            <person name="Glavina del Rio T."/>
            <person name="Hammon N."/>
            <person name="Israni S."/>
            <person name="Dalin E."/>
            <person name="Tice H."/>
            <person name="Pitluck S."/>
            <person name="Chertkov O."/>
            <person name="Brettin T."/>
            <person name="Bruce D."/>
            <person name="Han C."/>
            <person name="Tapia R."/>
            <person name="Gilna P."/>
            <person name="Schmutz J."/>
            <person name="Larimer F."/>
            <person name="Land M."/>
            <person name="Hauser L."/>
            <person name="Kyrpides N."/>
            <person name="Kim E."/>
            <person name="Newman D."/>
            <person name="Salticov C."/>
            <person name="Konstantinidis K."/>
            <person name="Klappenback J."/>
            <person name="Tiedje J."/>
            <person name="Richardson P."/>
        </authorList>
    </citation>
    <scope>NUCLEOTIDE SEQUENCE [LARGE SCALE GENOMIC DNA]</scope>
    <source>
        <strain>ANA-3</strain>
    </source>
</reference>
<sequence>MAVFKTLTDADIATFSTGLVAGVDEVGRGPLVGDVVTAAVILDPNRPIAGLNDSKKLSEKRREALFDEICEKALSYHVGRASPLEIDELNILHATMLAMQRAVAGLARAPELVLVDGNRSPAFTHQGLTLISHSIVKGDGLIASISAASIIAKVTRDREMDALDAAYPQYGFAKHKGYPTKAHFDAIAEHGVFDQYRKSFKPVKALLER</sequence>
<organism>
    <name type="scientific">Shewanella sp. (strain ANA-3)</name>
    <dbReference type="NCBI Taxonomy" id="94122"/>
    <lineage>
        <taxon>Bacteria</taxon>
        <taxon>Pseudomonadati</taxon>
        <taxon>Pseudomonadota</taxon>
        <taxon>Gammaproteobacteria</taxon>
        <taxon>Alteromonadales</taxon>
        <taxon>Shewanellaceae</taxon>
        <taxon>Shewanella</taxon>
    </lineage>
</organism>
<keyword id="KW-0963">Cytoplasm</keyword>
<keyword id="KW-0255">Endonuclease</keyword>
<keyword id="KW-0378">Hydrolase</keyword>
<keyword id="KW-0464">Manganese</keyword>
<keyword id="KW-0479">Metal-binding</keyword>
<keyword id="KW-0540">Nuclease</keyword>
<comment type="function">
    <text evidence="1">Endonuclease that specifically degrades the RNA of RNA-DNA hybrids.</text>
</comment>
<comment type="catalytic activity">
    <reaction evidence="1">
        <text>Endonucleolytic cleavage to 5'-phosphomonoester.</text>
        <dbReference type="EC" id="3.1.26.4"/>
    </reaction>
</comment>
<comment type="cofactor">
    <cofactor evidence="1">
        <name>Mn(2+)</name>
        <dbReference type="ChEBI" id="CHEBI:29035"/>
    </cofactor>
    <cofactor evidence="1">
        <name>Mg(2+)</name>
        <dbReference type="ChEBI" id="CHEBI:18420"/>
    </cofactor>
    <text evidence="1">Manganese or magnesium. Binds 1 divalent metal ion per monomer in the absence of substrate. May bind a second metal ion after substrate binding.</text>
</comment>
<comment type="subcellular location">
    <subcellularLocation>
        <location evidence="1">Cytoplasm</location>
    </subcellularLocation>
</comment>
<comment type="similarity">
    <text evidence="1">Belongs to the RNase HII family.</text>
</comment>
<proteinExistence type="inferred from homology"/>
<evidence type="ECO:0000255" key="1">
    <source>
        <dbReference type="HAMAP-Rule" id="MF_00052"/>
    </source>
</evidence>
<evidence type="ECO:0000255" key="2">
    <source>
        <dbReference type="PROSITE-ProRule" id="PRU01319"/>
    </source>
</evidence>
<accession>A0KZ09</accession>
<gene>
    <name evidence="1" type="primary">rnhB</name>
    <name type="ordered locus">Shewana3_2801</name>
</gene>
<dbReference type="EC" id="3.1.26.4" evidence="1"/>
<dbReference type="EMBL" id="CP000469">
    <property type="protein sequence ID" value="ABK49028.1"/>
    <property type="molecule type" value="Genomic_DNA"/>
</dbReference>
<dbReference type="RefSeq" id="WP_011717680.1">
    <property type="nucleotide sequence ID" value="NC_008577.1"/>
</dbReference>
<dbReference type="SMR" id="A0KZ09"/>
<dbReference type="STRING" id="94122.Shewana3_2801"/>
<dbReference type="KEGG" id="shn:Shewana3_2801"/>
<dbReference type="eggNOG" id="COG0164">
    <property type="taxonomic scope" value="Bacteria"/>
</dbReference>
<dbReference type="HOGENOM" id="CLU_036532_3_2_6"/>
<dbReference type="OrthoDB" id="9803420at2"/>
<dbReference type="Proteomes" id="UP000002589">
    <property type="component" value="Chromosome"/>
</dbReference>
<dbReference type="GO" id="GO:0005737">
    <property type="term" value="C:cytoplasm"/>
    <property type="evidence" value="ECO:0007669"/>
    <property type="project" value="UniProtKB-SubCell"/>
</dbReference>
<dbReference type="GO" id="GO:0032299">
    <property type="term" value="C:ribonuclease H2 complex"/>
    <property type="evidence" value="ECO:0007669"/>
    <property type="project" value="TreeGrafter"/>
</dbReference>
<dbReference type="GO" id="GO:0030145">
    <property type="term" value="F:manganese ion binding"/>
    <property type="evidence" value="ECO:0007669"/>
    <property type="project" value="UniProtKB-UniRule"/>
</dbReference>
<dbReference type="GO" id="GO:0003723">
    <property type="term" value="F:RNA binding"/>
    <property type="evidence" value="ECO:0007669"/>
    <property type="project" value="InterPro"/>
</dbReference>
<dbReference type="GO" id="GO:0004523">
    <property type="term" value="F:RNA-DNA hybrid ribonuclease activity"/>
    <property type="evidence" value="ECO:0007669"/>
    <property type="project" value="UniProtKB-UniRule"/>
</dbReference>
<dbReference type="GO" id="GO:0043137">
    <property type="term" value="P:DNA replication, removal of RNA primer"/>
    <property type="evidence" value="ECO:0007669"/>
    <property type="project" value="TreeGrafter"/>
</dbReference>
<dbReference type="GO" id="GO:0006298">
    <property type="term" value="P:mismatch repair"/>
    <property type="evidence" value="ECO:0007669"/>
    <property type="project" value="TreeGrafter"/>
</dbReference>
<dbReference type="CDD" id="cd07182">
    <property type="entry name" value="RNase_HII_bacteria_HII_like"/>
    <property type="match status" value="1"/>
</dbReference>
<dbReference type="FunFam" id="3.30.420.10:FF:000006">
    <property type="entry name" value="Ribonuclease HII"/>
    <property type="match status" value="1"/>
</dbReference>
<dbReference type="Gene3D" id="3.30.420.10">
    <property type="entry name" value="Ribonuclease H-like superfamily/Ribonuclease H"/>
    <property type="match status" value="1"/>
</dbReference>
<dbReference type="HAMAP" id="MF_00052_B">
    <property type="entry name" value="RNase_HII_B"/>
    <property type="match status" value="1"/>
</dbReference>
<dbReference type="InterPro" id="IPR022898">
    <property type="entry name" value="RNase_HII"/>
</dbReference>
<dbReference type="InterPro" id="IPR001352">
    <property type="entry name" value="RNase_HII/HIII"/>
</dbReference>
<dbReference type="InterPro" id="IPR024567">
    <property type="entry name" value="RNase_HII/HIII_dom"/>
</dbReference>
<dbReference type="InterPro" id="IPR012337">
    <property type="entry name" value="RNaseH-like_sf"/>
</dbReference>
<dbReference type="InterPro" id="IPR036397">
    <property type="entry name" value="RNaseH_sf"/>
</dbReference>
<dbReference type="NCBIfam" id="NF000595">
    <property type="entry name" value="PRK00015.1-3"/>
    <property type="match status" value="1"/>
</dbReference>
<dbReference type="NCBIfam" id="NF000596">
    <property type="entry name" value="PRK00015.1-4"/>
    <property type="match status" value="1"/>
</dbReference>
<dbReference type="PANTHER" id="PTHR10954">
    <property type="entry name" value="RIBONUCLEASE H2 SUBUNIT A"/>
    <property type="match status" value="1"/>
</dbReference>
<dbReference type="PANTHER" id="PTHR10954:SF18">
    <property type="entry name" value="RIBONUCLEASE HII"/>
    <property type="match status" value="1"/>
</dbReference>
<dbReference type="Pfam" id="PF01351">
    <property type="entry name" value="RNase_HII"/>
    <property type="match status" value="1"/>
</dbReference>
<dbReference type="SUPFAM" id="SSF53098">
    <property type="entry name" value="Ribonuclease H-like"/>
    <property type="match status" value="1"/>
</dbReference>
<dbReference type="PROSITE" id="PS51975">
    <property type="entry name" value="RNASE_H_2"/>
    <property type="match status" value="1"/>
</dbReference>
<protein>
    <recommendedName>
        <fullName evidence="1">Ribonuclease HII</fullName>
        <shortName evidence="1">RNase HII</shortName>
        <ecNumber evidence="1">3.1.26.4</ecNumber>
    </recommendedName>
</protein>
<feature type="chain" id="PRO_1000031202" description="Ribonuclease HII">
    <location>
        <begin position="1"/>
        <end position="209"/>
    </location>
</feature>
<feature type="domain" description="RNase H type-2" evidence="2">
    <location>
        <begin position="18"/>
        <end position="209"/>
    </location>
</feature>
<feature type="binding site" evidence="1">
    <location>
        <position position="24"/>
    </location>
    <ligand>
        <name>a divalent metal cation</name>
        <dbReference type="ChEBI" id="CHEBI:60240"/>
    </ligand>
</feature>
<feature type="binding site" evidence="1">
    <location>
        <position position="25"/>
    </location>
    <ligand>
        <name>a divalent metal cation</name>
        <dbReference type="ChEBI" id="CHEBI:60240"/>
    </ligand>
</feature>
<feature type="binding site" evidence="1">
    <location>
        <position position="116"/>
    </location>
    <ligand>
        <name>a divalent metal cation</name>
        <dbReference type="ChEBI" id="CHEBI:60240"/>
    </ligand>
</feature>